<keyword id="KW-0240">DNA-directed RNA polymerase</keyword>
<keyword id="KW-0460">Magnesium</keyword>
<keyword id="KW-0479">Metal-binding</keyword>
<keyword id="KW-0548">Nucleotidyltransferase</keyword>
<keyword id="KW-0804">Transcription</keyword>
<keyword id="KW-0808">Transferase</keyword>
<keyword id="KW-0862">Zinc</keyword>
<dbReference type="EC" id="2.7.7.6" evidence="1"/>
<dbReference type="EMBL" id="BA000031">
    <property type="protein sequence ID" value="BAC61184.1"/>
    <property type="molecule type" value="Genomic_DNA"/>
</dbReference>
<dbReference type="RefSeq" id="NP_799300.1">
    <property type="nucleotide sequence ID" value="NC_004603.1"/>
</dbReference>
<dbReference type="RefSeq" id="WP_005456484.1">
    <property type="nucleotide sequence ID" value="NC_004603.1"/>
</dbReference>
<dbReference type="SMR" id="Q87KQ5"/>
<dbReference type="GeneID" id="1190496"/>
<dbReference type="KEGG" id="vpa:VP2921"/>
<dbReference type="PATRIC" id="fig|223926.6.peg.2809"/>
<dbReference type="eggNOG" id="COG0086">
    <property type="taxonomic scope" value="Bacteria"/>
</dbReference>
<dbReference type="HOGENOM" id="CLU_000524_3_1_6"/>
<dbReference type="Proteomes" id="UP000002493">
    <property type="component" value="Chromosome 1"/>
</dbReference>
<dbReference type="GO" id="GO:0000428">
    <property type="term" value="C:DNA-directed RNA polymerase complex"/>
    <property type="evidence" value="ECO:0007669"/>
    <property type="project" value="UniProtKB-KW"/>
</dbReference>
<dbReference type="GO" id="GO:0003677">
    <property type="term" value="F:DNA binding"/>
    <property type="evidence" value="ECO:0007669"/>
    <property type="project" value="UniProtKB-UniRule"/>
</dbReference>
<dbReference type="GO" id="GO:0003899">
    <property type="term" value="F:DNA-directed RNA polymerase activity"/>
    <property type="evidence" value="ECO:0007669"/>
    <property type="project" value="UniProtKB-UniRule"/>
</dbReference>
<dbReference type="GO" id="GO:0000287">
    <property type="term" value="F:magnesium ion binding"/>
    <property type="evidence" value="ECO:0007669"/>
    <property type="project" value="UniProtKB-UniRule"/>
</dbReference>
<dbReference type="GO" id="GO:0008270">
    <property type="term" value="F:zinc ion binding"/>
    <property type="evidence" value="ECO:0007669"/>
    <property type="project" value="UniProtKB-UniRule"/>
</dbReference>
<dbReference type="GO" id="GO:0006351">
    <property type="term" value="P:DNA-templated transcription"/>
    <property type="evidence" value="ECO:0007669"/>
    <property type="project" value="UniProtKB-UniRule"/>
</dbReference>
<dbReference type="CDD" id="cd02655">
    <property type="entry name" value="RNAP_beta'_C"/>
    <property type="match status" value="1"/>
</dbReference>
<dbReference type="CDD" id="cd01609">
    <property type="entry name" value="RNAP_beta'_N"/>
    <property type="match status" value="1"/>
</dbReference>
<dbReference type="FunFam" id="1.10.132.30:FF:000003">
    <property type="entry name" value="DNA-directed RNA polymerase subunit beta"/>
    <property type="match status" value="1"/>
</dbReference>
<dbReference type="FunFam" id="1.10.150.390:FF:000002">
    <property type="entry name" value="DNA-directed RNA polymerase subunit beta"/>
    <property type="match status" value="1"/>
</dbReference>
<dbReference type="FunFam" id="1.10.40.90:FF:000001">
    <property type="entry name" value="DNA-directed RNA polymerase subunit beta"/>
    <property type="match status" value="1"/>
</dbReference>
<dbReference type="FunFam" id="4.10.860.120:FF:000001">
    <property type="entry name" value="DNA-directed RNA polymerase subunit beta"/>
    <property type="match status" value="1"/>
</dbReference>
<dbReference type="Gene3D" id="1.10.132.30">
    <property type="match status" value="1"/>
</dbReference>
<dbReference type="Gene3D" id="1.10.150.390">
    <property type="match status" value="1"/>
</dbReference>
<dbReference type="Gene3D" id="1.10.1790.20">
    <property type="match status" value="1"/>
</dbReference>
<dbReference type="Gene3D" id="1.10.40.90">
    <property type="match status" value="1"/>
</dbReference>
<dbReference type="Gene3D" id="2.40.40.20">
    <property type="match status" value="1"/>
</dbReference>
<dbReference type="Gene3D" id="2.40.50.100">
    <property type="match status" value="3"/>
</dbReference>
<dbReference type="Gene3D" id="4.10.860.120">
    <property type="entry name" value="RNA polymerase II, clamp domain"/>
    <property type="match status" value="1"/>
</dbReference>
<dbReference type="Gene3D" id="1.10.274.100">
    <property type="entry name" value="RNA polymerase Rpb1, domain 3"/>
    <property type="match status" value="1"/>
</dbReference>
<dbReference type="HAMAP" id="MF_01322">
    <property type="entry name" value="RNApol_bact_RpoC"/>
    <property type="match status" value="1"/>
</dbReference>
<dbReference type="InterPro" id="IPR045867">
    <property type="entry name" value="DNA-dir_RpoC_beta_prime"/>
</dbReference>
<dbReference type="InterPro" id="IPR012754">
    <property type="entry name" value="DNA-dir_RpoC_beta_prime_bact"/>
</dbReference>
<dbReference type="InterPro" id="IPR000722">
    <property type="entry name" value="RNA_pol_asu"/>
</dbReference>
<dbReference type="InterPro" id="IPR006592">
    <property type="entry name" value="RNA_pol_N"/>
</dbReference>
<dbReference type="InterPro" id="IPR007080">
    <property type="entry name" value="RNA_pol_Rpb1_1"/>
</dbReference>
<dbReference type="InterPro" id="IPR007066">
    <property type="entry name" value="RNA_pol_Rpb1_3"/>
</dbReference>
<dbReference type="InterPro" id="IPR042102">
    <property type="entry name" value="RNA_pol_Rpb1_3_sf"/>
</dbReference>
<dbReference type="InterPro" id="IPR007083">
    <property type="entry name" value="RNA_pol_Rpb1_4"/>
</dbReference>
<dbReference type="InterPro" id="IPR007081">
    <property type="entry name" value="RNA_pol_Rpb1_5"/>
</dbReference>
<dbReference type="InterPro" id="IPR044893">
    <property type="entry name" value="RNA_pol_Rpb1_clamp_domain"/>
</dbReference>
<dbReference type="InterPro" id="IPR038120">
    <property type="entry name" value="Rpb1_funnel_sf"/>
</dbReference>
<dbReference type="NCBIfam" id="TIGR02386">
    <property type="entry name" value="rpoC_TIGR"/>
    <property type="match status" value="1"/>
</dbReference>
<dbReference type="PANTHER" id="PTHR19376">
    <property type="entry name" value="DNA-DIRECTED RNA POLYMERASE"/>
    <property type="match status" value="1"/>
</dbReference>
<dbReference type="PANTHER" id="PTHR19376:SF54">
    <property type="entry name" value="DNA-DIRECTED RNA POLYMERASE SUBUNIT BETA"/>
    <property type="match status" value="1"/>
</dbReference>
<dbReference type="Pfam" id="PF04997">
    <property type="entry name" value="RNA_pol_Rpb1_1"/>
    <property type="match status" value="1"/>
</dbReference>
<dbReference type="Pfam" id="PF00623">
    <property type="entry name" value="RNA_pol_Rpb1_2"/>
    <property type="match status" value="2"/>
</dbReference>
<dbReference type="Pfam" id="PF04983">
    <property type="entry name" value="RNA_pol_Rpb1_3"/>
    <property type="match status" value="1"/>
</dbReference>
<dbReference type="Pfam" id="PF05000">
    <property type="entry name" value="RNA_pol_Rpb1_4"/>
    <property type="match status" value="1"/>
</dbReference>
<dbReference type="Pfam" id="PF04998">
    <property type="entry name" value="RNA_pol_Rpb1_5"/>
    <property type="match status" value="1"/>
</dbReference>
<dbReference type="SMART" id="SM00663">
    <property type="entry name" value="RPOLA_N"/>
    <property type="match status" value="1"/>
</dbReference>
<dbReference type="SUPFAM" id="SSF64484">
    <property type="entry name" value="beta and beta-prime subunits of DNA dependent RNA-polymerase"/>
    <property type="match status" value="1"/>
</dbReference>
<protein>
    <recommendedName>
        <fullName evidence="1">DNA-directed RNA polymerase subunit beta'</fullName>
        <shortName evidence="1">RNAP subunit beta'</shortName>
        <ecNumber evidence="1">2.7.7.6</ecNumber>
    </recommendedName>
    <alternativeName>
        <fullName evidence="1">RNA polymerase subunit beta'</fullName>
    </alternativeName>
    <alternativeName>
        <fullName evidence="1">Transcriptase subunit beta'</fullName>
    </alternativeName>
</protein>
<sequence>MKDLLNFLKAQHKTEEFDAIKIGLSSPDMIRSWSFGEVKKPETINYRTFKPERDGLFCARIFGPVKDYECLCGKYKRLKHRGVICEKCGVEVTQTKVRRDRMGHIELASPVAHIWFLKSLPSRIGLLMDIPLRDIERVLYFEMYVVTEPGMTDLEKGQMLTEEEYLDRLEEWGDEFTAKMGAEAIKDLLGSMDMHAEAEQMREELETTNSETKRKKVTKRLKLVEAFIASGNNPEWMILTVLPVLPPDLRPLVPLDGGRFATSDLNDLYRRVINRNNRLKRLLELAAPDIIVRNEKRMLQESVDALLDNGRRGRAITGSNKRPLKSLADMIKGKQGRFRQNLLGKRVDYSGRSVITVGPYLRLHQCGLPKKMALELFKPFIYSKLETRGLATTIKAAKKMVEREEAVVWDILDEVIREHPVLLNRAPTLHRLGIQAFEPVLIEGKAIQLHPLVCAAYNADFDGDQMAVHVPLTLEAQLEARTLMMSTNNILSPASGDPIIVPSQDVVLGLYYMTREKINVKGEGMYLSGPAEAEKAYRTKQAELHARVKVRITETVVDEDGNSTTETKMVDTTVGRAMLWQIVPAGLPYSIVNQKLGKKQISNLLNEAYRKLGLKDTVIFADQIMYTGFAYAALSGVSVGIDDMVVPPAKYTEIAEAEEEVREIQEQYQSGLVTAGERYNKVIDIWASTNDRVAKAMMENLSSETVVNREGEEEQQESFNSIYMMADSGARGSAAQIRQLAGMRGLMARPDGSIIETPITANFKEGLNVLQYFISTHGARKGLADTALKTANSGYLTRRLVDVAQDVVVTEHDCGTHEGVDMMPHIEGGDVKVALSELALGRVVAEDVLKPGTEDVLIPRNTLIDEKWCQIMEENSVDSMKVRSVVTCDSDFGCCAQCYGRDLARGHLVNQGEAVGVIAAQSIGEPGTQLTMRTFHIGGAASTAAAENSIQAKNNGSVKLHNAKFVTNKDGKLVITSRASELTIIDEFGRTKEKHKLPYGSLLSKGDNDAVEAGETVANWEAHTLPIITEVAGRIQFVDMIDGVTVSRQTDDLTGLSSSEVTDAAARPAAGKDMRPAIKLVDEQGNDVMIPGTEMPAHYFLPGKAIVNIEDGAEVGVGDTLARIPQKSGGNKDITGGLPRVADLFEARKPKEPAILAEHTGTVSFGKETKGKRRLVITRDSGEVYEEMIPKHRQLNVFEGERVERGDVIADGPESPHDILRLRGVHAVTQYIANEVQEVYRLQGVKINDKHIETIVRQMLRKCTITHAGDSEFLPGEQVEYSQVKIANRNLEAEGKEPARFERELLGITKASLATESFISAASFQETTRVLTEAAVSGKRDDLRGLKENVIVGRLIPAGTGFAYHQERQAKRAEAQEGPSAEQATDNLAALLNAGFSSDE</sequence>
<gene>
    <name evidence="1" type="primary">rpoC</name>
    <name type="ordered locus">VP2921</name>
</gene>
<proteinExistence type="inferred from homology"/>
<organism>
    <name type="scientific">Vibrio parahaemolyticus serotype O3:K6 (strain RIMD 2210633)</name>
    <dbReference type="NCBI Taxonomy" id="223926"/>
    <lineage>
        <taxon>Bacteria</taxon>
        <taxon>Pseudomonadati</taxon>
        <taxon>Pseudomonadota</taxon>
        <taxon>Gammaproteobacteria</taxon>
        <taxon>Vibrionales</taxon>
        <taxon>Vibrionaceae</taxon>
        <taxon>Vibrio</taxon>
    </lineage>
</organism>
<accession>Q87KQ5</accession>
<feature type="chain" id="PRO_0000067828" description="DNA-directed RNA polymerase subunit beta'">
    <location>
        <begin position="1"/>
        <end position="1400"/>
    </location>
</feature>
<feature type="region of interest" description="Disordered" evidence="2">
    <location>
        <begin position="1368"/>
        <end position="1400"/>
    </location>
</feature>
<feature type="binding site" evidence="1">
    <location>
        <position position="70"/>
    </location>
    <ligand>
        <name>Zn(2+)</name>
        <dbReference type="ChEBI" id="CHEBI:29105"/>
        <label>1</label>
    </ligand>
</feature>
<feature type="binding site" evidence="1">
    <location>
        <position position="72"/>
    </location>
    <ligand>
        <name>Zn(2+)</name>
        <dbReference type="ChEBI" id="CHEBI:29105"/>
        <label>1</label>
    </ligand>
</feature>
<feature type="binding site" evidence="1">
    <location>
        <position position="85"/>
    </location>
    <ligand>
        <name>Zn(2+)</name>
        <dbReference type="ChEBI" id="CHEBI:29105"/>
        <label>1</label>
    </ligand>
</feature>
<feature type="binding site" evidence="1">
    <location>
        <position position="88"/>
    </location>
    <ligand>
        <name>Zn(2+)</name>
        <dbReference type="ChEBI" id="CHEBI:29105"/>
        <label>1</label>
    </ligand>
</feature>
<feature type="binding site" evidence="1">
    <location>
        <position position="460"/>
    </location>
    <ligand>
        <name>Mg(2+)</name>
        <dbReference type="ChEBI" id="CHEBI:18420"/>
    </ligand>
</feature>
<feature type="binding site" evidence="1">
    <location>
        <position position="462"/>
    </location>
    <ligand>
        <name>Mg(2+)</name>
        <dbReference type="ChEBI" id="CHEBI:18420"/>
    </ligand>
</feature>
<feature type="binding site" evidence="1">
    <location>
        <position position="464"/>
    </location>
    <ligand>
        <name>Mg(2+)</name>
        <dbReference type="ChEBI" id="CHEBI:18420"/>
    </ligand>
</feature>
<feature type="binding site" evidence="1">
    <location>
        <position position="814"/>
    </location>
    <ligand>
        <name>Zn(2+)</name>
        <dbReference type="ChEBI" id="CHEBI:29105"/>
        <label>2</label>
    </ligand>
</feature>
<feature type="binding site" evidence="1">
    <location>
        <position position="888"/>
    </location>
    <ligand>
        <name>Zn(2+)</name>
        <dbReference type="ChEBI" id="CHEBI:29105"/>
        <label>2</label>
    </ligand>
</feature>
<feature type="binding site" evidence="1">
    <location>
        <position position="895"/>
    </location>
    <ligand>
        <name>Zn(2+)</name>
        <dbReference type="ChEBI" id="CHEBI:29105"/>
        <label>2</label>
    </ligand>
</feature>
<feature type="binding site" evidence="1">
    <location>
        <position position="898"/>
    </location>
    <ligand>
        <name>Zn(2+)</name>
        <dbReference type="ChEBI" id="CHEBI:29105"/>
        <label>2</label>
    </ligand>
</feature>
<comment type="function">
    <text evidence="1">DNA-dependent RNA polymerase catalyzes the transcription of DNA into RNA using the four ribonucleoside triphosphates as substrates.</text>
</comment>
<comment type="catalytic activity">
    <reaction evidence="1">
        <text>RNA(n) + a ribonucleoside 5'-triphosphate = RNA(n+1) + diphosphate</text>
        <dbReference type="Rhea" id="RHEA:21248"/>
        <dbReference type="Rhea" id="RHEA-COMP:14527"/>
        <dbReference type="Rhea" id="RHEA-COMP:17342"/>
        <dbReference type="ChEBI" id="CHEBI:33019"/>
        <dbReference type="ChEBI" id="CHEBI:61557"/>
        <dbReference type="ChEBI" id="CHEBI:140395"/>
        <dbReference type="EC" id="2.7.7.6"/>
    </reaction>
</comment>
<comment type="cofactor">
    <cofactor evidence="1">
        <name>Mg(2+)</name>
        <dbReference type="ChEBI" id="CHEBI:18420"/>
    </cofactor>
    <text evidence="1">Binds 1 Mg(2+) ion per subunit.</text>
</comment>
<comment type="cofactor">
    <cofactor evidence="1">
        <name>Zn(2+)</name>
        <dbReference type="ChEBI" id="CHEBI:29105"/>
    </cofactor>
    <text evidence="1">Binds 2 Zn(2+) ions per subunit.</text>
</comment>
<comment type="subunit">
    <text evidence="1">The RNAP catalytic core consists of 2 alpha, 1 beta, 1 beta' and 1 omega subunit. When a sigma factor is associated with the core the holoenzyme is formed, which can initiate transcription.</text>
</comment>
<comment type="similarity">
    <text evidence="1">Belongs to the RNA polymerase beta' chain family.</text>
</comment>
<evidence type="ECO:0000255" key="1">
    <source>
        <dbReference type="HAMAP-Rule" id="MF_01322"/>
    </source>
</evidence>
<evidence type="ECO:0000256" key="2">
    <source>
        <dbReference type="SAM" id="MobiDB-lite"/>
    </source>
</evidence>
<name>RPOC_VIBPA</name>
<reference key="1">
    <citation type="journal article" date="2003" name="Lancet">
        <title>Genome sequence of Vibrio parahaemolyticus: a pathogenic mechanism distinct from that of V. cholerae.</title>
        <authorList>
            <person name="Makino K."/>
            <person name="Oshima K."/>
            <person name="Kurokawa K."/>
            <person name="Yokoyama K."/>
            <person name="Uda T."/>
            <person name="Tagomori K."/>
            <person name="Iijima Y."/>
            <person name="Najima M."/>
            <person name="Nakano M."/>
            <person name="Yamashita A."/>
            <person name="Kubota Y."/>
            <person name="Kimura S."/>
            <person name="Yasunaga T."/>
            <person name="Honda T."/>
            <person name="Shinagawa H."/>
            <person name="Hattori M."/>
            <person name="Iida T."/>
        </authorList>
    </citation>
    <scope>NUCLEOTIDE SEQUENCE [LARGE SCALE GENOMIC DNA]</scope>
    <source>
        <strain>RIMD 2210633</strain>
    </source>
</reference>